<proteinExistence type="evidence at transcript level"/>
<gene>
    <name evidence="1" type="primary">MRPL58</name>
    <name type="synonym">ICT1</name>
</gene>
<sequence>MAAARCLRWGLSRAEAWLLPPPTSCCHRALHRQVEGTEFRSAYSLDKLYPESRGADTAWRVPGDAKQGNDDIPVDRLTISYCRSSGPGGQNVNKVNSKAEVRFHLASADWIAEPVRQKMALTHKNKINRAGELILTSEYSRYQFRNLADCLQKIRDMIAEASQPATEPSKEDAALQKLRIENMNRERLRKKRINSAIKTSRRVGTD</sequence>
<keyword id="KW-0025">Alternative splicing</keyword>
<keyword id="KW-0378">Hydrolase</keyword>
<keyword id="KW-0488">Methylation</keyword>
<keyword id="KW-0496">Mitochondrion</keyword>
<keyword id="KW-0648">Protein biosynthesis</keyword>
<keyword id="KW-1185">Reference proteome</keyword>
<keyword id="KW-0687">Ribonucleoprotein</keyword>
<keyword id="KW-0689">Ribosomal protein</keyword>
<keyword id="KW-0809">Transit peptide</keyword>
<reference key="1">
    <citation type="submission" date="2005-08" db="EMBL/GenBank/DDBJ databases">
        <authorList>
            <consortium name="NIH - Mammalian Gene Collection (MGC) project"/>
        </authorList>
    </citation>
    <scope>NUCLEOTIDE SEQUENCE [LARGE SCALE MRNA] (ISOFORMS 1 AND 2)</scope>
    <source>
        <strain>Crossbred X Angus</strain>
        <strain>Hereford</strain>
        <tissue>Fetal brain</tissue>
        <tissue>Ileum</tissue>
    </source>
</reference>
<evidence type="ECO:0000250" key="1">
    <source>
        <dbReference type="UniProtKB" id="Q14197"/>
    </source>
</evidence>
<evidence type="ECO:0000255" key="2"/>
<evidence type="ECO:0000303" key="3">
    <source ref="1"/>
</evidence>
<evidence type="ECO:0000305" key="4"/>
<feature type="transit peptide" description="Mitochondrion" evidence="2">
    <location>
        <begin position="1"/>
        <end position="29"/>
    </location>
</feature>
<feature type="chain" id="PRO_0000045759" description="Large ribosomal subunit protein mL62">
    <location>
        <begin position="30"/>
        <end position="206"/>
    </location>
</feature>
<feature type="modified residue" description="N5-methylglutamine" evidence="1">
    <location>
        <position position="90"/>
    </location>
</feature>
<feature type="splice variant" id="VSP_039217" description="In isoform 2." evidence="3">
    <location>
        <begin position="34"/>
        <end position="62"/>
    </location>
</feature>
<organism>
    <name type="scientific">Bos taurus</name>
    <name type="common">Bovine</name>
    <dbReference type="NCBI Taxonomy" id="9913"/>
    <lineage>
        <taxon>Eukaryota</taxon>
        <taxon>Metazoa</taxon>
        <taxon>Chordata</taxon>
        <taxon>Craniata</taxon>
        <taxon>Vertebrata</taxon>
        <taxon>Euteleostomi</taxon>
        <taxon>Mammalia</taxon>
        <taxon>Eutheria</taxon>
        <taxon>Laurasiatheria</taxon>
        <taxon>Artiodactyla</taxon>
        <taxon>Ruminantia</taxon>
        <taxon>Pecora</taxon>
        <taxon>Bovidae</taxon>
        <taxon>Bovinae</taxon>
        <taxon>Bos</taxon>
    </lineage>
</organism>
<protein>
    <recommendedName>
        <fullName evidence="4">Large ribosomal subunit protein mL62</fullName>
    </recommendedName>
    <alternativeName>
        <fullName evidence="1">39S ribosomal protein L58, mitochondrial</fullName>
        <shortName>MRP-L58</shortName>
    </alternativeName>
    <alternativeName>
        <fullName>Immature colon carcinoma transcript 1 protein homolog</fullName>
    </alternativeName>
    <alternativeName>
        <fullName>Peptidyl-tRNA hydrolase ICT1, mitochondrial</fullName>
        <ecNumber>3.1.1.29</ecNumber>
    </alternativeName>
</protein>
<name>ICT1_BOVIN</name>
<comment type="function">
    <text evidence="1">Essential peptidyl-tRNA hydrolase component of the mitochondrial large ribosomal subunit. Acts as a codon-independent translation release factor that has lost all stop codon specificity and directs the termination of translation in mitochondrion, possibly in case of abortive elongation. May be involved in the hydrolysis of peptidyl-tRNAs that have been prematurely terminated and thus in the recycling of stalled mitochondrial ribosomes.</text>
</comment>
<comment type="catalytic activity">
    <reaction>
        <text>an N-acyl-L-alpha-aminoacyl-tRNA + H2O = an N-acyl-L-amino acid + a tRNA + H(+)</text>
        <dbReference type="Rhea" id="RHEA:54448"/>
        <dbReference type="Rhea" id="RHEA-COMP:10123"/>
        <dbReference type="Rhea" id="RHEA-COMP:13883"/>
        <dbReference type="ChEBI" id="CHEBI:15377"/>
        <dbReference type="ChEBI" id="CHEBI:15378"/>
        <dbReference type="ChEBI" id="CHEBI:59874"/>
        <dbReference type="ChEBI" id="CHEBI:78442"/>
        <dbReference type="ChEBI" id="CHEBI:138191"/>
        <dbReference type="EC" id="3.1.1.29"/>
    </reaction>
</comment>
<comment type="subunit">
    <text evidence="1">Component of the mitochondrial ribosome large subunit (39S) which comprises a 16S rRNA and about 50 distinct proteins.</text>
</comment>
<comment type="subcellular location">
    <subcellularLocation>
        <location evidence="1">Mitochondrion</location>
    </subcellularLocation>
</comment>
<comment type="alternative products">
    <event type="alternative splicing"/>
    <isoform>
        <id>Q3T116-1</id>
        <name>1</name>
        <sequence type="displayed"/>
    </isoform>
    <isoform>
        <id>Q3T116-2</id>
        <name>2</name>
        <sequence type="described" ref="VSP_039217"/>
    </isoform>
</comment>
<comment type="PTM">
    <text evidence="1">Methylation of glutamine in the GGQ triplet by HEMK1.</text>
</comment>
<comment type="similarity">
    <text evidence="4">Belongs to the prokaryotic/mitochondrial release factor family. Mitochondrion-specific ribosomal protein mL62 subfamily.</text>
</comment>
<comment type="caution">
    <text evidence="4">In contrast to other members of the family, lacks the regions that come into close contact with the mRNA in the ribosomal A-site and determine the STOP codon specificity, explaining the loss of codon specificity for translation release factor activity.</text>
</comment>
<accession>Q3T116</accession>
<accession>A7YWR4</accession>
<dbReference type="EC" id="3.1.1.29"/>
<dbReference type="EMBL" id="BC102162">
    <property type="protein sequence ID" value="AAI02163.1"/>
    <property type="molecule type" value="mRNA"/>
</dbReference>
<dbReference type="EMBL" id="BC134736">
    <property type="protein sequence ID" value="AAI34737.1"/>
    <property type="molecule type" value="mRNA"/>
</dbReference>
<dbReference type="RefSeq" id="NP_001029665.1">
    <molecule id="Q3T116-1"/>
    <property type="nucleotide sequence ID" value="NM_001034493.1"/>
</dbReference>
<dbReference type="RefSeq" id="XP_005221275.1">
    <molecule id="Q3T116-2"/>
    <property type="nucleotide sequence ID" value="XM_005221218.5"/>
</dbReference>
<dbReference type="SMR" id="Q3T116"/>
<dbReference type="FunCoup" id="Q3T116">
    <property type="interactions" value="2996"/>
</dbReference>
<dbReference type="STRING" id="9913.ENSBTAP00000004276"/>
<dbReference type="PaxDb" id="9913-ENSBTAP00000004276"/>
<dbReference type="Ensembl" id="ENSBTAT00000004276.5">
    <molecule id="Q3T116-1"/>
    <property type="protein sequence ID" value="ENSBTAP00000004276.3"/>
    <property type="gene ID" value="ENSBTAG00000003303.6"/>
</dbReference>
<dbReference type="GeneID" id="515465"/>
<dbReference type="KEGG" id="bta:515465"/>
<dbReference type="CTD" id="3396"/>
<dbReference type="VEuPathDB" id="HostDB:ENSBTAG00000003303"/>
<dbReference type="eggNOG" id="KOG3429">
    <property type="taxonomic scope" value="Eukaryota"/>
</dbReference>
<dbReference type="GeneTree" id="ENSGT00390000013268"/>
<dbReference type="HOGENOM" id="CLU_089470_6_1_1"/>
<dbReference type="InParanoid" id="Q3T116"/>
<dbReference type="OMA" id="GGQNVNC"/>
<dbReference type="OrthoDB" id="270639at2759"/>
<dbReference type="TreeFam" id="TF315161"/>
<dbReference type="Reactome" id="R-BTA-5389840">
    <property type="pathway name" value="Mitochondrial translation elongation"/>
</dbReference>
<dbReference type="Reactome" id="R-BTA-5419276">
    <property type="pathway name" value="Mitochondrial translation termination"/>
</dbReference>
<dbReference type="Proteomes" id="UP000009136">
    <property type="component" value="Chromosome 19"/>
</dbReference>
<dbReference type="Bgee" id="ENSBTAG00000003303">
    <property type="expression patterns" value="Expressed in tongue muscle and 106 other cell types or tissues"/>
</dbReference>
<dbReference type="GO" id="GO:0005743">
    <property type="term" value="C:mitochondrial inner membrane"/>
    <property type="evidence" value="ECO:0000304"/>
    <property type="project" value="Reactome"/>
</dbReference>
<dbReference type="GO" id="GO:0005762">
    <property type="term" value="C:mitochondrial large ribosomal subunit"/>
    <property type="evidence" value="ECO:0000250"/>
    <property type="project" value="UniProtKB"/>
</dbReference>
<dbReference type="GO" id="GO:0005739">
    <property type="term" value="C:mitochondrion"/>
    <property type="evidence" value="ECO:0000250"/>
    <property type="project" value="UniProtKB"/>
</dbReference>
<dbReference type="GO" id="GO:0004045">
    <property type="term" value="F:peptidyl-tRNA hydrolase activity"/>
    <property type="evidence" value="ECO:0000250"/>
    <property type="project" value="UniProtKB"/>
</dbReference>
<dbReference type="GO" id="GO:0016150">
    <property type="term" value="F:translation release factor activity, codon nonspecific"/>
    <property type="evidence" value="ECO:0000250"/>
    <property type="project" value="UniProtKB"/>
</dbReference>
<dbReference type="GO" id="GO:0070126">
    <property type="term" value="P:mitochondrial translational termination"/>
    <property type="evidence" value="ECO:0000250"/>
    <property type="project" value="UniProtKB"/>
</dbReference>
<dbReference type="GO" id="GO:0072344">
    <property type="term" value="P:rescue of stalled ribosome"/>
    <property type="evidence" value="ECO:0000250"/>
    <property type="project" value="UniProtKB"/>
</dbReference>
<dbReference type="FunFam" id="3.30.160.20:FF:000050">
    <property type="entry name" value="Peptidyl-tRNA hydrolase ICT1, mitochondrial"/>
    <property type="match status" value="1"/>
</dbReference>
<dbReference type="Gene3D" id="3.30.160.20">
    <property type="match status" value="1"/>
</dbReference>
<dbReference type="InterPro" id="IPR052104">
    <property type="entry name" value="Mito_Release_Factor_mL62"/>
</dbReference>
<dbReference type="InterPro" id="IPR000352">
    <property type="entry name" value="Pep_chain_release_fac_I"/>
</dbReference>
<dbReference type="PANTHER" id="PTHR11075:SF54">
    <property type="entry name" value="LARGE RIBOSOMAL SUBUNIT PROTEIN ML62"/>
    <property type="match status" value="1"/>
</dbReference>
<dbReference type="PANTHER" id="PTHR11075">
    <property type="entry name" value="PEPTIDE CHAIN RELEASE FACTOR"/>
    <property type="match status" value="1"/>
</dbReference>
<dbReference type="Pfam" id="PF00472">
    <property type="entry name" value="RF-1"/>
    <property type="match status" value="1"/>
</dbReference>
<dbReference type="SUPFAM" id="SSF110916">
    <property type="entry name" value="Peptidyl-tRNA hydrolase domain-like"/>
    <property type="match status" value="1"/>
</dbReference>